<accession>Q486Y6</accession>
<dbReference type="EMBL" id="CP000083">
    <property type="protein sequence ID" value="AAZ28180.1"/>
    <property type="molecule type" value="Genomic_DNA"/>
</dbReference>
<dbReference type="RefSeq" id="WP_011041973.1">
    <property type="nucleotide sequence ID" value="NC_003910.7"/>
</dbReference>
<dbReference type="SMR" id="Q486Y6"/>
<dbReference type="STRING" id="167879.CPS_1136"/>
<dbReference type="KEGG" id="cps:CPS_1136"/>
<dbReference type="eggNOG" id="COG0443">
    <property type="taxonomic scope" value="Bacteria"/>
</dbReference>
<dbReference type="HOGENOM" id="CLU_005965_2_3_6"/>
<dbReference type="Proteomes" id="UP000000547">
    <property type="component" value="Chromosome"/>
</dbReference>
<dbReference type="GO" id="GO:0005524">
    <property type="term" value="F:ATP binding"/>
    <property type="evidence" value="ECO:0007669"/>
    <property type="project" value="UniProtKB-KW"/>
</dbReference>
<dbReference type="GO" id="GO:0016887">
    <property type="term" value="F:ATP hydrolysis activity"/>
    <property type="evidence" value="ECO:0007669"/>
    <property type="project" value="UniProtKB-UniRule"/>
</dbReference>
<dbReference type="GO" id="GO:0140662">
    <property type="term" value="F:ATP-dependent protein folding chaperone"/>
    <property type="evidence" value="ECO:0007669"/>
    <property type="project" value="InterPro"/>
</dbReference>
<dbReference type="GO" id="GO:0051082">
    <property type="term" value="F:unfolded protein binding"/>
    <property type="evidence" value="ECO:0007669"/>
    <property type="project" value="InterPro"/>
</dbReference>
<dbReference type="GO" id="GO:0016226">
    <property type="term" value="P:iron-sulfur cluster assembly"/>
    <property type="evidence" value="ECO:0007669"/>
    <property type="project" value="InterPro"/>
</dbReference>
<dbReference type="FunFam" id="3.30.420.40:FF:000046">
    <property type="entry name" value="Chaperone protein HscA"/>
    <property type="match status" value="1"/>
</dbReference>
<dbReference type="FunFam" id="2.60.34.10:FF:000005">
    <property type="entry name" value="Chaperone protein HscA homolog"/>
    <property type="match status" value="1"/>
</dbReference>
<dbReference type="Gene3D" id="1.20.1270.10">
    <property type="match status" value="1"/>
</dbReference>
<dbReference type="Gene3D" id="3.30.420.40">
    <property type="match status" value="2"/>
</dbReference>
<dbReference type="Gene3D" id="3.90.640.10">
    <property type="entry name" value="Actin, Chain A, domain 4"/>
    <property type="match status" value="1"/>
</dbReference>
<dbReference type="Gene3D" id="2.60.34.10">
    <property type="entry name" value="Substrate Binding Domain Of DNAk, Chain A, domain 1"/>
    <property type="match status" value="1"/>
</dbReference>
<dbReference type="HAMAP" id="MF_00679">
    <property type="entry name" value="HscA"/>
    <property type="match status" value="1"/>
</dbReference>
<dbReference type="InterPro" id="IPR043129">
    <property type="entry name" value="ATPase_NBD"/>
</dbReference>
<dbReference type="InterPro" id="IPR018181">
    <property type="entry name" value="Heat_shock_70_CS"/>
</dbReference>
<dbReference type="InterPro" id="IPR029048">
    <property type="entry name" value="HSP70_C_sf"/>
</dbReference>
<dbReference type="InterPro" id="IPR029047">
    <property type="entry name" value="HSP70_peptide-bd_sf"/>
</dbReference>
<dbReference type="InterPro" id="IPR013126">
    <property type="entry name" value="Hsp_70_fam"/>
</dbReference>
<dbReference type="InterPro" id="IPR010236">
    <property type="entry name" value="ISC_FeS_clus_asmbl_HscA"/>
</dbReference>
<dbReference type="NCBIfam" id="TIGR01991">
    <property type="entry name" value="HscA"/>
    <property type="match status" value="1"/>
</dbReference>
<dbReference type="NCBIfam" id="NF003520">
    <property type="entry name" value="PRK05183.1"/>
    <property type="match status" value="1"/>
</dbReference>
<dbReference type="PANTHER" id="PTHR19375">
    <property type="entry name" value="HEAT SHOCK PROTEIN 70KDA"/>
    <property type="match status" value="1"/>
</dbReference>
<dbReference type="Pfam" id="PF00012">
    <property type="entry name" value="HSP70"/>
    <property type="match status" value="1"/>
</dbReference>
<dbReference type="PRINTS" id="PR00301">
    <property type="entry name" value="HEATSHOCK70"/>
</dbReference>
<dbReference type="SUPFAM" id="SSF53067">
    <property type="entry name" value="Actin-like ATPase domain"/>
    <property type="match status" value="2"/>
</dbReference>
<dbReference type="SUPFAM" id="SSF100934">
    <property type="entry name" value="Heat shock protein 70kD (HSP70), C-terminal subdomain"/>
    <property type="match status" value="1"/>
</dbReference>
<dbReference type="SUPFAM" id="SSF100920">
    <property type="entry name" value="Heat shock protein 70kD (HSP70), peptide-binding domain"/>
    <property type="match status" value="1"/>
</dbReference>
<dbReference type="PROSITE" id="PS00297">
    <property type="entry name" value="HSP70_1"/>
    <property type="match status" value="1"/>
</dbReference>
<dbReference type="PROSITE" id="PS00329">
    <property type="entry name" value="HSP70_2"/>
    <property type="match status" value="1"/>
</dbReference>
<dbReference type="PROSITE" id="PS01036">
    <property type="entry name" value="HSP70_3"/>
    <property type="match status" value="1"/>
</dbReference>
<organism>
    <name type="scientific">Colwellia psychrerythraea (strain 34H / ATCC BAA-681)</name>
    <name type="common">Vibrio psychroerythus</name>
    <dbReference type="NCBI Taxonomy" id="167879"/>
    <lineage>
        <taxon>Bacteria</taxon>
        <taxon>Pseudomonadati</taxon>
        <taxon>Pseudomonadota</taxon>
        <taxon>Gammaproteobacteria</taxon>
        <taxon>Alteromonadales</taxon>
        <taxon>Colwelliaceae</taxon>
        <taxon>Colwellia</taxon>
    </lineage>
</organism>
<comment type="function">
    <text evidence="1">Chaperone involved in the maturation of iron-sulfur cluster-containing proteins. Has a low intrinsic ATPase activity which is markedly stimulated by HscB.</text>
</comment>
<comment type="similarity">
    <text evidence="1">Belongs to the heat shock protein 70 family.</text>
</comment>
<name>HSCA_COLP3</name>
<gene>
    <name evidence="1" type="primary">hscA</name>
    <name type="ordered locus">CPS_1136</name>
</gene>
<evidence type="ECO:0000255" key="1">
    <source>
        <dbReference type="HAMAP-Rule" id="MF_00679"/>
    </source>
</evidence>
<feature type="chain" id="PRO_1000044855" description="Chaperone protein HscA homolog">
    <location>
        <begin position="1"/>
        <end position="620"/>
    </location>
</feature>
<keyword id="KW-0067">ATP-binding</keyword>
<keyword id="KW-0143">Chaperone</keyword>
<keyword id="KW-0547">Nucleotide-binding</keyword>
<proteinExistence type="inferred from homology"/>
<reference key="1">
    <citation type="journal article" date="2005" name="Proc. Natl. Acad. Sci. U.S.A.">
        <title>The psychrophilic lifestyle as revealed by the genome sequence of Colwellia psychrerythraea 34H through genomic and proteomic analyses.</title>
        <authorList>
            <person name="Methe B.A."/>
            <person name="Nelson K.E."/>
            <person name="Deming J.W."/>
            <person name="Momen B."/>
            <person name="Melamud E."/>
            <person name="Zhang X."/>
            <person name="Moult J."/>
            <person name="Madupu R."/>
            <person name="Nelson W.C."/>
            <person name="Dodson R.J."/>
            <person name="Brinkac L.M."/>
            <person name="Daugherty S.C."/>
            <person name="Durkin A.S."/>
            <person name="DeBoy R.T."/>
            <person name="Kolonay J.F."/>
            <person name="Sullivan S.A."/>
            <person name="Zhou L."/>
            <person name="Davidsen T.M."/>
            <person name="Wu M."/>
            <person name="Huston A.L."/>
            <person name="Lewis M."/>
            <person name="Weaver B."/>
            <person name="Weidman J.F."/>
            <person name="Khouri H."/>
            <person name="Utterback T.R."/>
            <person name="Feldblyum T.V."/>
            <person name="Fraser C.M."/>
        </authorList>
    </citation>
    <scope>NUCLEOTIDE SEQUENCE [LARGE SCALE GENOMIC DNA]</scope>
    <source>
        <strain>34H / ATCC BAA-681</strain>
    </source>
</reference>
<sequence>MALLQIAEPGQSTVPHEHRLAAGIDLGTTNSLIASVQSGNASTLSDDQGRDILPSIVSYQAGNVLVGQTAQALSIEDAQNTITSAKRLIGRSLKDIQSKYPSLPYEFCGDENHPEIMTRQGAVNPVQVSAEILKSLNLRAQAALGGELTGVVITVPAHFDDAQRQSTKDAAKLAGVSVLRLLNEPTAAAVAYGLDSGQEGVIAVYDLGGGTFDISILRLNKGVFEVLATGGDSALGGDDFDVVLVDYLVEQAGLVRPLSPSLERQLMQQACFAKEQLTTKEEVDITISLDSDSDWKTSLTKAQLNKLISSLVNKTLRACRRTLKDADITIDEVIEVVMVGGSTRVPLVRSEVEKHFNKTPLTSIDPDKVVAIGAAIQADVLVGNKPDSDMLLLDVTPLSLGLETMGGLVEKVIPRNTTIPVAKAQEFTTFKDGQTAMAVHVLQGERELVEDCRSLARFELRGIPAMTAGAAHIRVTFKVDADGLLSVSAMEKSSGVESSIEVKPSFGLDDNQISQMIKDSMSNAADDMQARMLKEQQVEASRVIESVQAALLADSKLLNSDEITVIENAIKSLAQVSQGQEIKAIENALDKLNDSTAIFAERRMDSSISEALAGQAVDKI</sequence>
<protein>
    <recommendedName>
        <fullName evidence="1">Chaperone protein HscA homolog</fullName>
    </recommendedName>
</protein>